<comment type="function">
    <text evidence="4 9">Pore-forming subunit of Nav1.7, a voltage-gated sodium (Nav) channel that directly mediates the depolarizing phase of action potentials in excitable membranes. Navs, also called VGSCs (voltage-gated sodium channels) or VDSCs (voltage-dependent sodium channels), operate by switching between closed and open conformations depending on the voltage difference across the membrane. In the open conformation they allow Na(+) ions to selectively pass through the pore, along their electrochemical gradient. The influx of Na(+) ions provokes membrane depolarization, initiating the propagation of electrical signals throughout cells and tissues (By similarity). Nav1.7 plays a crucial role in controlling the excitability and action potential propagation from nociceptor neurons, thereby contributing to the sensory perception of pain (PubMed:15314237).</text>
</comment>
<comment type="catalytic activity">
    <reaction evidence="4">
        <text>Na(+)(in) = Na(+)(out)</text>
        <dbReference type="Rhea" id="RHEA:34963"/>
        <dbReference type="ChEBI" id="CHEBI:29101"/>
    </reaction>
</comment>
<comment type="subunit">
    <text evidence="4 8 11">The Nav1.7 voltage-gated sodium channel consists of an ion-conducting alpha subunit SCN9A which is functional on its own regulated by one or more beta-1 (SCN1B), beta-2 (SCN2B), beta-3 (SCN3B) and beta-4 (SCN4B) subunits. SCN1B and SCN3B are non-covalently associated with SCN9A. SCN2B and SCN4B are disulfide-linked to SCN9A. SCN1B regulates channel inactivation (By similarity). Interacts with NEDD4 and NEDD4L; regulates Nav1.7 activity most probably through ubiquitination and subsequent endocytosis (PubMed:15123669). Interacts with TMEM233; modulates the gating properties of NaV1.7 (PubMed:37117223).</text>
</comment>
<comment type="subcellular location">
    <subcellularLocation>
        <location evidence="8">Cell membrane</location>
        <topology evidence="4">Multi-pass membrane protein</topology>
    </subcellularLocation>
    <subcellularLocation>
        <location evidence="4">Cell projection</location>
        <location evidence="4">Neuron projection</location>
    </subcellularLocation>
    <subcellularLocation>
        <location evidence="4">Cell projection</location>
        <location evidence="4">Axon</location>
    </subcellularLocation>
    <text evidence="4">Localizes to neuron terminals. Also detected at Nodes of Ranvier.</text>
</comment>
<comment type="tissue specificity">
    <text evidence="10">Expressed strongly in sciatic nerves, with moderate levels in kidney (PubMed:31647222). Not detected in liver, brain and muscle (PubMed:31647222).</text>
</comment>
<comment type="domain">
    <text evidence="13">The sequence contains 4 internal repeats, each with 5 hydrophobic segments (S1, S2, S3, S5, S6) and one positively charged segment (S4). Segments S4 are probably the voltage-sensors and are characterized by a series of positively charged amino acids at every third position.</text>
</comment>
<comment type="PTM">
    <text evidence="8">Ubiquitinated by NEDD4L; which may promote its endocytosis.</text>
</comment>
<comment type="PTM">
    <text evidence="4">Phosphorylation at Ser-1488 by PKC in a highly conserved cytoplasmic loop increases peak sodium currents.</text>
</comment>
<comment type="similarity">
    <text evidence="13">Belongs to the sodium channel (TC 1.A.1.10) family. Nav1.7/SCN9A subfamily.</text>
</comment>
<accession>Q62205</accession>
<accession>A2ASI7</accession>
<accession>Q5DTI0</accession>
<name>SCN9A_MOUSE</name>
<proteinExistence type="evidence at protein level"/>
<evidence type="ECO:0000250" key="1">
    <source>
        <dbReference type="UniProtKB" id="D0E0C2"/>
    </source>
</evidence>
<evidence type="ECO:0000250" key="2">
    <source>
        <dbReference type="UniProtKB" id="O08562"/>
    </source>
</evidence>
<evidence type="ECO:0000250" key="3">
    <source>
        <dbReference type="UniProtKB" id="P04775"/>
    </source>
</evidence>
<evidence type="ECO:0000250" key="4">
    <source>
        <dbReference type="UniProtKB" id="Q15858"/>
    </source>
</evidence>
<evidence type="ECO:0000255" key="5"/>
<evidence type="ECO:0000255" key="6">
    <source>
        <dbReference type="PROSITE-ProRule" id="PRU00116"/>
    </source>
</evidence>
<evidence type="ECO:0000256" key="7">
    <source>
        <dbReference type="SAM" id="MobiDB-lite"/>
    </source>
</evidence>
<evidence type="ECO:0000269" key="8">
    <source>
    </source>
</evidence>
<evidence type="ECO:0000269" key="9">
    <source>
    </source>
</evidence>
<evidence type="ECO:0000269" key="10">
    <source>
    </source>
</evidence>
<evidence type="ECO:0000269" key="11">
    <source>
    </source>
</evidence>
<evidence type="ECO:0000303" key="12">
    <source ref="3"/>
</evidence>
<evidence type="ECO:0000305" key="13"/>
<evidence type="ECO:0000312" key="14">
    <source>
        <dbReference type="MGI" id="MGI:107636"/>
    </source>
</evidence>
<feature type="chain" id="PRO_0000048503" description="Sodium channel protein type 9 subunit alpha">
    <location>
        <begin position="1"/>
        <end position="1984"/>
    </location>
</feature>
<feature type="topological domain" description="Cytoplasmic" evidence="13">
    <location>
        <begin position="1"/>
        <end position="125"/>
    </location>
</feature>
<feature type="transmembrane region" description="Helical; Name=S1 of repeat I" evidence="4">
    <location>
        <begin position="126"/>
        <end position="145"/>
    </location>
</feature>
<feature type="topological domain" description="Extracellular" evidence="13">
    <location>
        <begin position="146"/>
        <end position="150"/>
    </location>
</feature>
<feature type="transmembrane region" description="Helical; Name=S2 of repeat I" evidence="4">
    <location>
        <begin position="151"/>
        <end position="172"/>
    </location>
</feature>
<feature type="topological domain" description="Cytoplasmic" evidence="13">
    <location>
        <begin position="173"/>
        <end position="185"/>
    </location>
</feature>
<feature type="transmembrane region" description="Helical; Name=S3 of repeat I" evidence="4">
    <location>
        <begin position="186"/>
        <end position="204"/>
    </location>
</feature>
<feature type="topological domain" description="Extracellular" evidence="13">
    <location>
        <begin position="205"/>
        <end position="210"/>
    </location>
</feature>
<feature type="transmembrane region" description="Helical; Name=S4 of repeat I" evidence="4">
    <location>
        <begin position="211"/>
        <end position="227"/>
    </location>
</feature>
<feature type="topological domain" description="Cytoplasmic" evidence="13">
    <location>
        <begin position="228"/>
        <end position="241"/>
    </location>
</feature>
<feature type="transmembrane region" description="Helical; Name=S5 of repeat I" evidence="4">
    <location>
        <begin position="242"/>
        <end position="267"/>
    </location>
</feature>
<feature type="topological domain" description="Extracellular" evidence="13">
    <location>
        <begin position="268"/>
        <end position="346"/>
    </location>
</feature>
<feature type="intramembrane region" description="Pore-forming" evidence="4">
    <location>
        <begin position="347"/>
        <end position="363"/>
    </location>
</feature>
<feature type="topological domain" description="Extracellular" evidence="13">
    <location>
        <begin position="364"/>
        <end position="376"/>
    </location>
</feature>
<feature type="transmembrane region" description="Helical; Name=S6 of repeat I" evidence="4">
    <location>
        <begin position="377"/>
        <end position="402"/>
    </location>
</feature>
<feature type="topological domain" description="Cytoplasmic" evidence="13">
    <location>
        <begin position="403"/>
        <end position="744"/>
    </location>
</feature>
<feature type="transmembrane region" description="Helical; Name=S1 of repeat II" evidence="4">
    <location>
        <begin position="745"/>
        <end position="761"/>
    </location>
</feature>
<feature type="topological domain" description="Extracellular" evidence="13">
    <location>
        <begin position="762"/>
        <end position="770"/>
    </location>
</feature>
<feature type="transmembrane region" description="Helical; Name=S2 of repeat II" evidence="4">
    <location>
        <begin position="771"/>
        <end position="795"/>
    </location>
</feature>
<feature type="topological domain" description="Cytoplasmic" evidence="13">
    <location>
        <begin position="796"/>
        <end position="804"/>
    </location>
</feature>
<feature type="transmembrane region" description="Helical; Name=S3 of repeat II" evidence="4">
    <location>
        <begin position="805"/>
        <end position="821"/>
    </location>
</feature>
<feature type="topological domain" description="Extracellular" evidence="13">
    <location>
        <begin position="822"/>
        <end position="830"/>
    </location>
</feature>
<feature type="transmembrane region" description="Helical; Name=S4 of repeat II" evidence="4">
    <location>
        <begin position="831"/>
        <end position="847"/>
    </location>
</feature>
<feature type="topological domain" description="Cytoplasmic" evidence="13">
    <location>
        <begin position="848"/>
        <end position="864"/>
    </location>
</feature>
<feature type="transmembrane region" description="Helical; Name=S5 of repeat II" evidence="4">
    <location>
        <begin position="865"/>
        <end position="887"/>
    </location>
</feature>
<feature type="topological domain" description="Extracellular" evidence="13">
    <location>
        <begin position="888"/>
        <end position="914"/>
    </location>
</feature>
<feature type="intramembrane region" description="Pore-forming" evidence="4">
    <location>
        <begin position="915"/>
        <end position="927"/>
    </location>
</feature>
<feature type="topological domain" description="Extracellular" evidence="13">
    <location>
        <begin position="928"/>
        <end position="939"/>
    </location>
</feature>
<feature type="transmembrane region" description="Helical; Name=S6 of repeat II" evidence="4">
    <location>
        <begin position="940"/>
        <end position="966"/>
    </location>
</feature>
<feature type="topological domain" description="Cytoplasmic" evidence="13">
    <location>
        <begin position="967"/>
        <end position="1185"/>
    </location>
</feature>
<feature type="transmembrane region" description="Helical; Name=S1 of repeat III" evidence="4">
    <location>
        <begin position="1186"/>
        <end position="1210"/>
    </location>
</feature>
<feature type="topological domain" description="Extracellular" evidence="13">
    <location>
        <begin position="1211"/>
        <end position="1222"/>
    </location>
</feature>
<feature type="transmembrane region" description="Helical; Name=S2 of repeat III" evidence="4">
    <location>
        <begin position="1223"/>
        <end position="1248"/>
    </location>
</feature>
<feature type="topological domain" description="Cytoplasmic" evidence="13">
    <location>
        <begin position="1249"/>
        <end position="1250"/>
    </location>
</feature>
<feature type="transmembrane region" description="Helical; Name=S3 of repeat III" evidence="4">
    <location>
        <begin position="1251"/>
        <end position="1276"/>
    </location>
</feature>
<feature type="topological domain" description="Extracellular" evidence="13">
    <location>
        <begin position="1277"/>
        <end position="1285"/>
    </location>
</feature>
<feature type="transmembrane region" description="Helical; Name=S4 of repeat III" evidence="4">
    <location>
        <begin position="1286"/>
        <end position="1302"/>
    </location>
</feature>
<feature type="topological domain" description="Cytoplasmic" evidence="13">
    <location>
        <begin position="1303"/>
        <end position="1315"/>
    </location>
</feature>
<feature type="transmembrane region" description="Helical; Name=S5 of repeat III" evidence="4">
    <location>
        <begin position="1316"/>
        <end position="1340"/>
    </location>
</feature>
<feature type="topological domain" description="Extracellular" evidence="13">
    <location>
        <begin position="1341"/>
        <end position="1392"/>
    </location>
</feature>
<feature type="intramembrane region" description="Pore-forming" evidence="4">
    <location>
        <begin position="1393"/>
        <end position="1403"/>
    </location>
</feature>
<feature type="topological domain" description="Extracellular" evidence="13">
    <location>
        <begin position="1404"/>
        <end position="1429"/>
    </location>
</feature>
<feature type="transmembrane region" description="Helical; Name=S6 of repeat III" evidence="4">
    <location>
        <begin position="1430"/>
        <end position="1455"/>
    </location>
</feature>
<feature type="topological domain" description="Cytoplasmic" evidence="13">
    <location>
        <begin position="1456"/>
        <end position="1512"/>
    </location>
</feature>
<feature type="transmembrane region" description="Helical; Name=S1 of repeat IV" evidence="4">
    <location>
        <begin position="1513"/>
        <end position="1532"/>
    </location>
</feature>
<feature type="topological domain" description="Extracellular" evidence="13">
    <location>
        <begin position="1533"/>
        <end position="1543"/>
    </location>
</feature>
<feature type="transmembrane region" description="Helical; Name=S2 of repeat IV" evidence="4">
    <location>
        <begin position="1544"/>
        <end position="1565"/>
    </location>
</feature>
<feature type="topological domain" description="Cytoplasmic" evidence="13">
    <location>
        <begin position="1566"/>
        <end position="1574"/>
    </location>
</feature>
<feature type="transmembrane region" description="Helical; Name=S3 of repeat IV" evidence="4">
    <location>
        <begin position="1575"/>
        <end position="1596"/>
    </location>
</feature>
<feature type="topological domain" description="Extracellular" evidence="13">
    <location>
        <begin position="1597"/>
        <end position="1605"/>
    </location>
</feature>
<feature type="transmembrane region" description="Helical; Name=S4 of repeat IV" evidence="4">
    <location>
        <begin position="1606"/>
        <end position="1625"/>
    </location>
</feature>
<feature type="topological domain" description="Cytoplasmic" evidence="13">
    <location>
        <begin position="1626"/>
        <end position="1638"/>
    </location>
</feature>
<feature type="transmembrane region" description="Helical; Name=S5 of repeat IV" evidence="4">
    <location>
        <begin position="1639"/>
        <end position="1661"/>
    </location>
</feature>
<feature type="topological domain" description="Extracellular" evidence="13">
    <location>
        <begin position="1662"/>
        <end position="1684"/>
    </location>
</feature>
<feature type="intramembrane region" description="Pore-forming" evidence="4">
    <location>
        <begin position="1685"/>
        <end position="1697"/>
    </location>
</feature>
<feature type="topological domain" description="Extracellular" evidence="13">
    <location>
        <begin position="1698"/>
        <end position="1731"/>
    </location>
</feature>
<feature type="transmembrane region" description="Helical; Name=S6 of repeat IV" evidence="4">
    <location>
        <begin position="1732"/>
        <end position="1757"/>
    </location>
</feature>
<feature type="topological domain" description="Cytoplasmic" evidence="13">
    <location>
        <begin position="1758"/>
        <end position="1984"/>
    </location>
</feature>
<feature type="repeat" description="I" evidence="13">
    <location>
        <begin position="112"/>
        <end position="410"/>
    </location>
</feature>
<feature type="repeat" description="II" evidence="13">
    <location>
        <begin position="725"/>
        <end position="988"/>
    </location>
</feature>
<feature type="repeat" description="III" evidence="13">
    <location>
        <begin position="1178"/>
        <end position="1486"/>
    </location>
</feature>
<feature type="repeat" description="IV" evidence="13">
    <location>
        <begin position="1495"/>
        <end position="1793"/>
    </location>
</feature>
<feature type="domain" description="IQ" evidence="6">
    <location>
        <begin position="1887"/>
        <end position="1916"/>
    </location>
</feature>
<feature type="region of interest" description="Disordered" evidence="7">
    <location>
        <begin position="26"/>
        <end position="55"/>
    </location>
</feature>
<feature type="region of interest" description="Disordered" evidence="7">
    <location>
        <begin position="458"/>
        <end position="540"/>
    </location>
</feature>
<feature type="region of interest" description="Disordered" evidence="7">
    <location>
        <begin position="574"/>
        <end position="609"/>
    </location>
</feature>
<feature type="region of interest" description="Disordered" evidence="7">
    <location>
        <begin position="1015"/>
        <end position="1039"/>
    </location>
</feature>
<feature type="region of interest" description="Disordered" evidence="7">
    <location>
        <begin position="1089"/>
        <end position="1145"/>
    </location>
</feature>
<feature type="region of interest" description="Disordered" evidence="7">
    <location>
        <begin position="1933"/>
        <end position="1984"/>
    </location>
</feature>
<feature type="coiled-coil region" evidence="5">
    <location>
        <begin position="402"/>
        <end position="449"/>
    </location>
</feature>
<feature type="coiled-coil region" evidence="5">
    <location>
        <begin position="684"/>
        <end position="708"/>
    </location>
</feature>
<feature type="compositionally biased region" description="Basic and acidic residues" evidence="7">
    <location>
        <begin position="26"/>
        <end position="39"/>
    </location>
</feature>
<feature type="compositionally biased region" description="Low complexity" evidence="7">
    <location>
        <begin position="458"/>
        <end position="471"/>
    </location>
</feature>
<feature type="compositionally biased region" description="Basic residues" evidence="7">
    <location>
        <begin position="474"/>
        <end position="486"/>
    </location>
</feature>
<feature type="compositionally biased region" description="Basic and acidic residues" evidence="7">
    <location>
        <begin position="489"/>
        <end position="509"/>
    </location>
</feature>
<feature type="compositionally biased region" description="Basic and acidic residues" evidence="7">
    <location>
        <begin position="574"/>
        <end position="584"/>
    </location>
</feature>
<feature type="compositionally biased region" description="Basic and acidic residues" evidence="7">
    <location>
        <begin position="1019"/>
        <end position="1035"/>
    </location>
</feature>
<feature type="compositionally biased region" description="Acidic residues" evidence="7">
    <location>
        <begin position="1135"/>
        <end position="1145"/>
    </location>
</feature>
<feature type="compositionally biased region" description="Polar residues" evidence="7">
    <location>
        <begin position="1946"/>
        <end position="1958"/>
    </location>
</feature>
<feature type="compositionally biased region" description="Basic and acidic residues" evidence="7">
    <location>
        <begin position="1960"/>
        <end position="1984"/>
    </location>
</feature>
<feature type="site" description="Is directly targeted by the spider protoxin-II" evidence="4">
    <location>
        <position position="821"/>
    </location>
</feature>
<feature type="site" description="Is directly targeted by the spider protoxin-II" evidence="4">
    <location>
        <position position="826"/>
    </location>
</feature>
<feature type="modified residue" description="Phosphoserine; by PKC" evidence="4">
    <location>
        <position position="1488"/>
    </location>
</feature>
<feature type="disulfide bond" evidence="1">
    <location>
        <begin position="275"/>
        <end position="324"/>
    </location>
</feature>
<feature type="disulfide bond" description="Interchain; with SCN2B or SCN4B" evidence="3">
    <location>
        <position position="894"/>
    </location>
</feature>
<feature type="disulfide bond" description="Interchain; with the conotoxin GVIIJ (when the channel is not linked to SCN2B or SCN4B; the bond to SCN2B or SCN4B protects the channel from the inhibition by toxin)" evidence="3">
    <location>
        <position position="894"/>
    </location>
</feature>
<feature type="disulfide bond" evidence="4">
    <location>
        <begin position="896"/>
        <end position="902"/>
    </location>
</feature>
<feature type="disulfide bond" evidence="1">
    <location>
        <begin position="934"/>
        <end position="943"/>
    </location>
</feature>
<feature type="disulfide bond" evidence="4">
    <location>
        <begin position="1348"/>
        <end position="1368"/>
    </location>
</feature>
<feature type="disulfide bond" evidence="4">
    <location>
        <begin position="1713"/>
        <end position="1728"/>
    </location>
</feature>
<reference key="1">
    <citation type="journal article" date="2009" name="PLoS Biol.">
        <title>Lineage-specific biology revealed by a finished genome assembly of the mouse.</title>
        <authorList>
            <person name="Church D.M."/>
            <person name="Goodstadt L."/>
            <person name="Hillier L.W."/>
            <person name="Zody M.C."/>
            <person name="Goldstein S."/>
            <person name="She X."/>
            <person name="Bult C.J."/>
            <person name="Agarwala R."/>
            <person name="Cherry J.L."/>
            <person name="DiCuccio M."/>
            <person name="Hlavina W."/>
            <person name="Kapustin Y."/>
            <person name="Meric P."/>
            <person name="Maglott D."/>
            <person name="Birtle Z."/>
            <person name="Marques A.C."/>
            <person name="Graves T."/>
            <person name="Zhou S."/>
            <person name="Teague B."/>
            <person name="Potamousis K."/>
            <person name="Churas C."/>
            <person name="Place M."/>
            <person name="Herschleb J."/>
            <person name="Runnheim R."/>
            <person name="Forrest D."/>
            <person name="Amos-Landgraf J."/>
            <person name="Schwartz D.C."/>
            <person name="Cheng Z."/>
            <person name="Lindblad-Toh K."/>
            <person name="Eichler E.E."/>
            <person name="Ponting C.P."/>
        </authorList>
    </citation>
    <scope>NUCLEOTIDE SEQUENCE [LARGE SCALE GENOMIC DNA]</scope>
    <source>
        <strain>C57BL/6J</strain>
    </source>
</reference>
<reference key="2">
    <citation type="submission" date="1995-05" db="EMBL/GenBank/DDBJ databases">
        <title>Mouse sodium channel 25 in m13mp19.</title>
        <authorList>
            <person name="Jover E."/>
            <person name="Shah V."/>
        </authorList>
    </citation>
    <scope>NUCLEOTIDE SEQUENCE [MRNA] OF 1675-1983</scope>
    <source>
        <tissue>Brain</tissue>
    </source>
</reference>
<reference key="3">
    <citation type="submission" date="2005-02" db="EMBL/GenBank/DDBJ databases">
        <title>Prediction of the coding sequences of mouse homologues of KIAA gene. The complete nucleotide sequences of mouse KIAA-homologous cDNAs identified by screening of terminal sequences of cDNA clones randomly sampled from size-fractionated libraries.</title>
        <authorList>
            <person name="Okazaki N."/>
            <person name="Kikuno R.F."/>
            <person name="Ohara R."/>
            <person name="Inamoto S."/>
            <person name="Nagase T."/>
            <person name="Ohara O."/>
            <person name="Koga H."/>
        </authorList>
    </citation>
    <scope>NUCLEOTIDE SEQUENCE [LARGE SCALE MRNA] OF 1740-1983</scope>
    <source>
        <tissue>Fetal brain</tissue>
    </source>
</reference>
<reference key="4">
    <citation type="journal article" date="2004" name="J. Biol. Chem.">
        <title>Regulation of neuronal voltage-gated sodium channels by the ubiquitin-protein ligases Nedd4 and Nedd4-2.</title>
        <authorList>
            <person name="Fotia A.B."/>
            <person name="Ekberg J."/>
            <person name="Adams D.J."/>
            <person name="Cook D.I."/>
            <person name="Poronnik P."/>
            <person name="Kumar S."/>
        </authorList>
    </citation>
    <scope>SUBCELLULAR LOCATION</scope>
    <scope>INTERACTION WITH NEDD4 AND NEDD4L</scope>
    <scope>UBIQUITINATION</scope>
</reference>
<reference key="5">
    <citation type="journal article" date="2004" name="Proc. Natl. Acad. Sci. U.S.A.">
        <title>Nociceptor-specific gene deletion reveals a major role for Nav1.7 (PN1) in acute and inflammatory pain.</title>
        <authorList>
            <person name="Nassar M.A."/>
            <person name="Stirling L.C."/>
            <person name="Forlani G."/>
            <person name="Baker M.D."/>
            <person name="Matthews E.A."/>
            <person name="Dickenson A.H."/>
            <person name="Wood J.N."/>
        </authorList>
    </citation>
    <scope>FUNCTION IN INFLAMMATORY PAIN</scope>
</reference>
<reference key="6">
    <citation type="journal article" date="2019" name="Bioconj. Chem.">
        <title>Fluorescence imaging of peripheral nerves by a Nav1.7-targeted inhibitor cystine knot peptide.</title>
        <authorList>
            <person name="Gonzales J."/>
            <person name="Demetrio de Souza Franca P."/>
            <person name="Jiang Y."/>
            <person name="Pirovano G."/>
            <person name="Kossatz S."/>
            <person name="Guru N."/>
            <person name="Yarilin D."/>
            <person name="Agwa A.J."/>
            <person name="Schroeder C.I."/>
            <person name="Patel S.G."/>
            <person name="Ganly I."/>
            <person name="King G.F."/>
            <person name="Reiner T."/>
        </authorList>
    </citation>
    <scope>TISSUE SPECIFICITY</scope>
</reference>
<reference key="7">
    <citation type="journal article" date="2023" name="Nat. Commun.">
        <title>Pain-causing stinging nettle toxins target TMEM233 to modulate NaV1.7 function.</title>
        <authorList>
            <person name="Jami S."/>
            <person name="Deuis J.R."/>
            <person name="Klasfauseweh T."/>
            <person name="Cheng X."/>
            <person name="Kurdyukov S."/>
            <person name="Chung F."/>
            <person name="Okorokov A.L."/>
            <person name="Li S."/>
            <person name="Zhang J."/>
            <person name="Cristofori-Armstrong B."/>
            <person name="Israel M.R."/>
            <person name="Ju R.J."/>
            <person name="Robinson S.D."/>
            <person name="Zhao P."/>
            <person name="Ragnarsson L."/>
            <person name="Andersson A."/>
            <person name="Tran P."/>
            <person name="Schendel V."/>
            <person name="McMahon K.L."/>
            <person name="Tran H.N.T."/>
            <person name="Chin Y.K."/>
            <person name="Zhu Y."/>
            <person name="Liu J."/>
            <person name="Crawford T."/>
            <person name="Purushothamvasan S."/>
            <person name="Habib A.M."/>
            <person name="Andersson D.A."/>
            <person name="Rash L.D."/>
            <person name="Wood J.N."/>
            <person name="Zhao J."/>
            <person name="Stehbens S.J."/>
            <person name="Mobli M."/>
            <person name="Leffler A."/>
            <person name="Jiang D."/>
            <person name="Cox J.J."/>
            <person name="Waxman S.G."/>
            <person name="Dib-Hajj S.D."/>
            <person name="Gregory Neely G."/>
            <person name="Durek T."/>
            <person name="Vetter I."/>
        </authorList>
    </citation>
    <scope>SUBUNIT</scope>
</reference>
<gene>
    <name evidence="14" type="primary">Scn9a</name>
    <name evidence="12" type="synonym">Kiaa4197</name>
</gene>
<organism>
    <name type="scientific">Mus musculus</name>
    <name type="common">Mouse</name>
    <dbReference type="NCBI Taxonomy" id="10090"/>
    <lineage>
        <taxon>Eukaryota</taxon>
        <taxon>Metazoa</taxon>
        <taxon>Chordata</taxon>
        <taxon>Craniata</taxon>
        <taxon>Vertebrata</taxon>
        <taxon>Euteleostomi</taxon>
        <taxon>Mammalia</taxon>
        <taxon>Eutheria</taxon>
        <taxon>Euarchontoglires</taxon>
        <taxon>Glires</taxon>
        <taxon>Rodentia</taxon>
        <taxon>Myomorpha</taxon>
        <taxon>Muroidea</taxon>
        <taxon>Muridae</taxon>
        <taxon>Murinae</taxon>
        <taxon>Mus</taxon>
        <taxon>Mus</taxon>
    </lineage>
</organism>
<dbReference type="EMBL" id="AL928623">
    <property type="status" value="NOT_ANNOTATED_CDS"/>
    <property type="molecule type" value="Genomic_DNA"/>
</dbReference>
<dbReference type="EMBL" id="AL928726">
    <property type="status" value="NOT_ANNOTATED_CDS"/>
    <property type="molecule type" value="Genomic_DNA"/>
</dbReference>
<dbReference type="EMBL" id="L42338">
    <property type="protein sequence ID" value="AAA67106.1"/>
    <property type="molecule type" value="mRNA"/>
</dbReference>
<dbReference type="EMBL" id="AK220540">
    <property type="protein sequence ID" value="BAD90315.1"/>
    <property type="molecule type" value="mRNA"/>
</dbReference>
<dbReference type="CCDS" id="CCDS71063.1"/>
<dbReference type="RefSeq" id="NP_001277603.1">
    <property type="nucleotide sequence ID" value="NM_001290674.1"/>
</dbReference>
<dbReference type="SMR" id="Q62205"/>
<dbReference type="BioGRID" id="203104">
    <property type="interactions" value="15"/>
</dbReference>
<dbReference type="FunCoup" id="Q62205">
    <property type="interactions" value="440"/>
</dbReference>
<dbReference type="IntAct" id="Q62205">
    <property type="interactions" value="1"/>
</dbReference>
<dbReference type="MINT" id="Q62205"/>
<dbReference type="STRING" id="10090.ENSMUSP00000097642"/>
<dbReference type="BindingDB" id="Q62205"/>
<dbReference type="ChEMBL" id="CHEMBL3414411"/>
<dbReference type="DrugCentral" id="Q62205"/>
<dbReference type="GuidetoPHARMACOLOGY" id="584"/>
<dbReference type="GlyGen" id="Q62205">
    <property type="glycosylation" value="7 sites, 5 N-linked glycans (7 sites)"/>
</dbReference>
<dbReference type="iPTMnet" id="Q62205"/>
<dbReference type="PhosphoSitePlus" id="Q62205"/>
<dbReference type="PaxDb" id="10090-ENSMUSP00000097642"/>
<dbReference type="ProteomicsDB" id="256751"/>
<dbReference type="ABCD" id="Q62205">
    <property type="antibodies" value="1 sequenced antibody"/>
</dbReference>
<dbReference type="Antibodypedia" id="33781">
    <property type="antibodies" value="496 antibodies from 39 providers"/>
</dbReference>
<dbReference type="DNASU" id="20274"/>
<dbReference type="Ensembl" id="ENSMUST00000100064.9">
    <property type="protein sequence ID" value="ENSMUSP00000097642.3"/>
    <property type="gene ID" value="ENSMUSG00000075316.14"/>
</dbReference>
<dbReference type="GeneID" id="20274"/>
<dbReference type="KEGG" id="mmu:20274"/>
<dbReference type="UCSC" id="uc008jxe.4">
    <property type="organism name" value="mouse"/>
</dbReference>
<dbReference type="AGR" id="MGI:107636"/>
<dbReference type="CTD" id="6335"/>
<dbReference type="MGI" id="MGI:107636">
    <property type="gene designation" value="Scn9a"/>
</dbReference>
<dbReference type="VEuPathDB" id="HostDB:ENSMUSG00000075316"/>
<dbReference type="eggNOG" id="KOG2301">
    <property type="taxonomic scope" value="Eukaryota"/>
</dbReference>
<dbReference type="GeneTree" id="ENSGT00940000161368"/>
<dbReference type="InParanoid" id="Q62205"/>
<dbReference type="OMA" id="VPHRPKE"/>
<dbReference type="OrthoDB" id="2984333at2759"/>
<dbReference type="PhylomeDB" id="Q62205"/>
<dbReference type="TreeFam" id="TF323985"/>
<dbReference type="BioGRID-ORCS" id="20274">
    <property type="hits" value="1 hit in 76 CRISPR screens"/>
</dbReference>
<dbReference type="ChiTaRS" id="Scn9a">
    <property type="organism name" value="mouse"/>
</dbReference>
<dbReference type="PRO" id="PR:Q62205"/>
<dbReference type="Proteomes" id="UP000000589">
    <property type="component" value="Chromosome 2"/>
</dbReference>
<dbReference type="RNAct" id="Q62205">
    <property type="molecule type" value="protein"/>
</dbReference>
<dbReference type="Bgee" id="ENSMUSG00000075316">
    <property type="expression patterns" value="Expressed in lumbar dorsal root ganglion and 73 other cell types or tissues"/>
</dbReference>
<dbReference type="ExpressionAtlas" id="Q62205">
    <property type="expression patterns" value="baseline and differential"/>
</dbReference>
<dbReference type="GO" id="GO:0043679">
    <property type="term" value="C:axon terminus"/>
    <property type="evidence" value="ECO:0000250"/>
    <property type="project" value="UniProtKB"/>
</dbReference>
<dbReference type="GO" id="GO:0033268">
    <property type="term" value="C:node of Ranvier"/>
    <property type="evidence" value="ECO:0007669"/>
    <property type="project" value="Ensembl"/>
</dbReference>
<dbReference type="GO" id="GO:0005886">
    <property type="term" value="C:plasma membrane"/>
    <property type="evidence" value="ECO:0000250"/>
    <property type="project" value="UniProtKB"/>
</dbReference>
<dbReference type="GO" id="GO:0001518">
    <property type="term" value="C:voltage-gated sodium channel complex"/>
    <property type="evidence" value="ECO:0007669"/>
    <property type="project" value="InterPro"/>
</dbReference>
<dbReference type="GO" id="GO:0005272">
    <property type="term" value="F:sodium channel activity"/>
    <property type="evidence" value="ECO:0000304"/>
    <property type="project" value="Reactome"/>
</dbReference>
<dbReference type="GO" id="GO:0005248">
    <property type="term" value="F:voltage-gated sodium channel activity"/>
    <property type="evidence" value="ECO:0000250"/>
    <property type="project" value="UniProtKB"/>
</dbReference>
<dbReference type="GO" id="GO:0098870">
    <property type="term" value="P:action potential propagation"/>
    <property type="evidence" value="ECO:0000250"/>
    <property type="project" value="UniProtKB"/>
</dbReference>
<dbReference type="GO" id="GO:0048266">
    <property type="term" value="P:behavioral response to pain"/>
    <property type="evidence" value="ECO:0000315"/>
    <property type="project" value="MGI"/>
</dbReference>
<dbReference type="GO" id="GO:0007623">
    <property type="term" value="P:circadian rhythm"/>
    <property type="evidence" value="ECO:0000315"/>
    <property type="project" value="MGI"/>
</dbReference>
<dbReference type="GO" id="GO:0050974">
    <property type="term" value="P:detection of mechanical stimulus involved in sensory perception"/>
    <property type="evidence" value="ECO:0000315"/>
    <property type="project" value="MGI"/>
</dbReference>
<dbReference type="GO" id="GO:0050965">
    <property type="term" value="P:detection of temperature stimulus involved in sensory perception of pain"/>
    <property type="evidence" value="ECO:0000315"/>
    <property type="project" value="MGI"/>
</dbReference>
<dbReference type="GO" id="GO:0006954">
    <property type="term" value="P:inflammatory response"/>
    <property type="evidence" value="ECO:0000315"/>
    <property type="project" value="MGI"/>
</dbReference>
<dbReference type="GO" id="GO:0019228">
    <property type="term" value="P:neuronal action potential"/>
    <property type="evidence" value="ECO:0007669"/>
    <property type="project" value="Ensembl"/>
</dbReference>
<dbReference type="GO" id="GO:0009791">
    <property type="term" value="P:post-embryonic development"/>
    <property type="evidence" value="ECO:0000315"/>
    <property type="project" value="MGI"/>
</dbReference>
<dbReference type="GO" id="GO:0009636">
    <property type="term" value="P:response to toxic substance"/>
    <property type="evidence" value="ECO:0000314"/>
    <property type="project" value="MGI"/>
</dbReference>
<dbReference type="GO" id="GO:0019233">
    <property type="term" value="P:sensory perception of pain"/>
    <property type="evidence" value="ECO:0000250"/>
    <property type="project" value="UniProtKB"/>
</dbReference>
<dbReference type="CDD" id="cd13433">
    <property type="entry name" value="Na_channel_gate"/>
    <property type="match status" value="1"/>
</dbReference>
<dbReference type="FunFam" id="1.10.238.10:FF:000002">
    <property type="entry name" value="Sodium channel protein"/>
    <property type="match status" value="1"/>
</dbReference>
<dbReference type="FunFam" id="1.10.287.70:FF:000001">
    <property type="entry name" value="Sodium channel protein"/>
    <property type="match status" value="1"/>
</dbReference>
<dbReference type="FunFam" id="1.10.287.70:FF:000006">
    <property type="entry name" value="Sodium channel protein"/>
    <property type="match status" value="1"/>
</dbReference>
<dbReference type="FunFam" id="1.20.120.350:FF:000002">
    <property type="entry name" value="Sodium channel protein"/>
    <property type="match status" value="1"/>
</dbReference>
<dbReference type="FunFam" id="1.20.120.350:FF:000004">
    <property type="entry name" value="Sodium channel protein"/>
    <property type="match status" value="1"/>
</dbReference>
<dbReference type="FunFam" id="1.20.120.350:FF:000005">
    <property type="entry name" value="Sodium channel protein"/>
    <property type="match status" value="1"/>
</dbReference>
<dbReference type="FunFam" id="1.20.5.1190:FF:000001">
    <property type="entry name" value="Sodium channel protein"/>
    <property type="match status" value="1"/>
</dbReference>
<dbReference type="FunFam" id="1.20.120.350:FF:000003">
    <property type="entry name" value="Voltage-dependent sodium channel"/>
    <property type="match status" value="1"/>
</dbReference>
<dbReference type="Gene3D" id="1.10.287.70">
    <property type="match status" value="4"/>
</dbReference>
<dbReference type="Gene3D" id="1.10.238.10">
    <property type="entry name" value="EF-hand"/>
    <property type="match status" value="1"/>
</dbReference>
<dbReference type="Gene3D" id="1.20.5.1190">
    <property type="entry name" value="iswi atpase"/>
    <property type="match status" value="1"/>
</dbReference>
<dbReference type="Gene3D" id="1.20.120.350">
    <property type="entry name" value="Voltage-gated potassium channels. Chain C"/>
    <property type="match status" value="4"/>
</dbReference>
<dbReference type="InterPro" id="IPR005821">
    <property type="entry name" value="Ion_trans_dom"/>
</dbReference>
<dbReference type="InterPro" id="IPR000048">
    <property type="entry name" value="IQ_motif_EF-hand-BS"/>
</dbReference>
<dbReference type="InterPro" id="IPR001696">
    <property type="entry name" value="Na_channel_asu"/>
</dbReference>
<dbReference type="InterPro" id="IPR044564">
    <property type="entry name" value="Na_chnl_inactivation_gate"/>
</dbReference>
<dbReference type="InterPro" id="IPR010526">
    <property type="entry name" value="Na_trans_assoc_dom"/>
</dbReference>
<dbReference type="InterPro" id="IPR024583">
    <property type="entry name" value="Na_trans_cytopl"/>
</dbReference>
<dbReference type="InterPro" id="IPR043203">
    <property type="entry name" value="VGCC_Ca_Na"/>
</dbReference>
<dbReference type="InterPro" id="IPR027359">
    <property type="entry name" value="Volt_channel_dom_sf"/>
</dbReference>
<dbReference type="PANTHER" id="PTHR10037:SF221">
    <property type="entry name" value="SODIUM CHANNEL PROTEIN TYPE 9 SUBUNIT ALPHA"/>
    <property type="match status" value="1"/>
</dbReference>
<dbReference type="PANTHER" id="PTHR10037">
    <property type="entry name" value="VOLTAGE-GATED CATION CHANNEL CALCIUM AND SODIUM"/>
    <property type="match status" value="1"/>
</dbReference>
<dbReference type="Pfam" id="PF00520">
    <property type="entry name" value="Ion_trans"/>
    <property type="match status" value="4"/>
</dbReference>
<dbReference type="Pfam" id="PF24609">
    <property type="entry name" value="IQ_SCN5A_C"/>
    <property type="match status" value="1"/>
</dbReference>
<dbReference type="Pfam" id="PF06512">
    <property type="entry name" value="Na_trans_assoc"/>
    <property type="match status" value="1"/>
</dbReference>
<dbReference type="Pfam" id="PF11933">
    <property type="entry name" value="Na_trans_cytopl"/>
    <property type="match status" value="1"/>
</dbReference>
<dbReference type="PRINTS" id="PR00170">
    <property type="entry name" value="NACHANNEL"/>
</dbReference>
<dbReference type="SMART" id="SM00015">
    <property type="entry name" value="IQ"/>
    <property type="match status" value="1"/>
</dbReference>
<dbReference type="SUPFAM" id="SSF81324">
    <property type="entry name" value="Voltage-gated potassium channels"/>
    <property type="match status" value="4"/>
</dbReference>
<keyword id="KW-1003">Cell membrane</keyword>
<keyword id="KW-0966">Cell projection</keyword>
<keyword id="KW-0175">Coiled coil</keyword>
<keyword id="KW-1015">Disulfide bond</keyword>
<keyword id="KW-0407">Ion channel</keyword>
<keyword id="KW-0406">Ion transport</keyword>
<keyword id="KW-0472">Membrane</keyword>
<keyword id="KW-0597">Phosphoprotein</keyword>
<keyword id="KW-1185">Reference proteome</keyword>
<keyword id="KW-0677">Repeat</keyword>
<keyword id="KW-0915">Sodium</keyword>
<keyword id="KW-0894">Sodium channel</keyword>
<keyword id="KW-0739">Sodium transport</keyword>
<keyword id="KW-0812">Transmembrane</keyword>
<keyword id="KW-1133">Transmembrane helix</keyword>
<keyword id="KW-0813">Transport</keyword>
<keyword id="KW-0832">Ubl conjugation</keyword>
<keyword id="KW-0851">Voltage-gated channel</keyword>
<sequence length="1984" mass="225813">MAMLPPPGPQSFVHFTKQSLALIEQRISEEKAKGHKDEKKDDEEEGPKPSSDLEAGKQLPFIYGDIPPGMVSEPLEDLDPYYADKKTFIVLNKGKAIFRFNATPALYMLSPFSPLRRISIKILVHSLFSMLIMCTILTNCIFMTMSNPPDWTKNVEYTFTGIYTFESLIKILARGFCVGEFTFLRDPWNWLDFVVIVFAYLTEFVNLGNVSALRTFRVLRALKTISVIPGLKTIVGALIQSVKKLSDVMILTVFCLSVFALIGLQLFMGNLKHKCFRKDLEQNETLESIMSTAESEEELKRYFYYLEGSKDALLCGFSTDSGQCPEGYECVTAGRNPDYGYTSFDTFGWAFLALFRLMTQDYWENLYQQTLRAAGKTYMIFFVVVIFLGSFYLINLILAVVAMAYEEQNQANIEEAKQKELEFQQMLDRLKKEQEEAEAIAAAAAEYTSLGRSRIMGLSESSSETSRLSSKSAKERRNRRKKKKQKLSSGEEKGDDEKLSKSGSEESIRKKSFHLGVEGHHRAREKRLSTPNQSPLSIRGSLFSARRSSRTSLFSFKGRGRDLGSETEFADDEHSIFGDNESRRGSLFVPHRPRERRSSNISQASRSPPVLPVNGKMHSAVDCNGVVSLVDGPSALMLPNGQLLPEVIIDKATSDDSGTTNQMRKKRLSSSYFLSEDMLNDPHLRQRAMSRASILTNTVEELEESRQKCPPWWYRFAHTFLIWNCSPYWIKFKKFIYFIVMDPFVDLAITICIVLNTLFMAMEHHPMTDEFKNVLAVGNLVFTGIFAAEMVLKLIAMDPYEYFQVGWNIFDSLIVTLSLVELFLADVEGLSVLRSFRLLRVFKLAKSWPTLNMLIKIIGNSVGALGNLTLVLAIIVFIFAVVGMQLFGKSYKECVCKINENCKLPRWHMNDFFHSFLIVFRVLCGEWIETMWDCMEVAGQTMCLIVYMMVMVIGNLVVLNLFLALLLSSFSSDNLTAIEEDTDANNLQIAVARIKRGINYVKQTLREFILKSFSKKPKGSKDTKRTADPNNKRENYISNRTLAEISKDHNFLKEKDKISGFSSSLDKSFMDENDYQSFIHNPSLTVTVPIAPGESDLENMNTEELSSDSDSDYSKERRNRSSSSECSTVDNPLPGEEEAEAEPINADEPEACFTDGCVRRFPCCQVNIDSGKGKVWWTIRKTCYRIVEHSWFESFIVLMILLSSGALAFEDIYIEKKKTIKIILEYADKIFTYIFILEMLLKWVAYGYKTYFTNAWCWLDFLIVDVSLVTLVANTLGYSDLGPIKSLRTLRALRPLRALSRFEGMRVVVNALIGAIPSIMNVLLVCLIFWLIFSIMGVNLFAGKFYECVNTTDGSRFSVSQVANRSECFALMNVSGNVRWKNLKVNFDNVGLGYLSLLQVATFKGWMDIMYAAVDSVNVNAQPIYEYNLYMYIYFVIFIIFGSFFTLNLFIGVIIDNFNQQKKKLGGQDIFMTEEQKKYYNAMKKLGSKKPQKPIPRPGNKFQGCIFDLVTNQAFDITIMVLICLNMVTMMVEKEGQTDYMSFVLYWINVVFIILFTGECVLKLISLRHYYFTVGWNIFDFVVVILSIVGMFLAEMIEKYFVSPTLFRVIRLARIGRILRLIKGAKGIRTLLFALMMSLPALFNIGLLLFLVMFIYAIFGMSNFAYVKKEAGINDMFNFETFGNSMICLFQITTSAGWDGLLAPILNSAPPDCDPKKVHPGSSVEGDCGNPSVGIFYFVSYIIISFLVVVNMYIAVILENFSVATEESTEPLSEDDFEMFYEVWEKFDPDATQFIEFCKLSDFAAALDPPLLIAKPNKVQLIAMDLPMVSGDRIHCLDILFAFTKRVLGESGEMDSLRSQMEERFMSANPSKVSYEPITTTLKRKQEDVSATIIQRAYRRYRLRQNVKNISSIYIKDGDRDDDLPNKEDIVFDNVNENSSPEKTDATASTISPPSYDSVTKPDQEKYETDKTEKEDKEKDESRK</sequence>
<protein>
    <recommendedName>
        <fullName evidence="4">Sodium channel protein type 9 subunit alpha</fullName>
    </recommendedName>
    <alternativeName>
        <fullName>Peripheral sodium channel 1</fullName>
        <shortName evidence="2">PN1</shortName>
    </alternativeName>
    <alternativeName>
        <fullName>Sodium channel protein type IX subunit alpha</fullName>
    </alternativeName>
    <alternativeName>
        <fullName>Voltage-gated sodium channel subunit alpha Nav1.7</fullName>
    </alternativeName>
</protein>